<reference key="1">
    <citation type="journal article" date="1999" name="Nature">
        <title>Sequence and analysis of chromosome 2 of the plant Arabidopsis thaliana.</title>
        <authorList>
            <person name="Lin X."/>
            <person name="Kaul S."/>
            <person name="Rounsley S.D."/>
            <person name="Shea T.P."/>
            <person name="Benito M.-I."/>
            <person name="Town C.D."/>
            <person name="Fujii C.Y."/>
            <person name="Mason T.M."/>
            <person name="Bowman C.L."/>
            <person name="Barnstead M.E."/>
            <person name="Feldblyum T.V."/>
            <person name="Buell C.R."/>
            <person name="Ketchum K.A."/>
            <person name="Lee J.J."/>
            <person name="Ronning C.M."/>
            <person name="Koo H.L."/>
            <person name="Moffat K.S."/>
            <person name="Cronin L.A."/>
            <person name="Shen M."/>
            <person name="Pai G."/>
            <person name="Van Aken S."/>
            <person name="Umayam L."/>
            <person name="Tallon L.J."/>
            <person name="Gill J.E."/>
            <person name="Adams M.D."/>
            <person name="Carrera A.J."/>
            <person name="Creasy T.H."/>
            <person name="Goodman H.M."/>
            <person name="Somerville C.R."/>
            <person name="Copenhaver G.P."/>
            <person name="Preuss D."/>
            <person name="Nierman W.C."/>
            <person name="White O."/>
            <person name="Eisen J.A."/>
            <person name="Salzberg S.L."/>
            <person name="Fraser C.M."/>
            <person name="Venter J.C."/>
        </authorList>
    </citation>
    <scope>NUCLEOTIDE SEQUENCE [LARGE SCALE GENOMIC DNA]</scope>
    <source>
        <strain>cv. Columbia</strain>
    </source>
</reference>
<reference key="2">
    <citation type="journal article" date="2017" name="Plant J.">
        <title>Araport11: a complete reannotation of the Arabidopsis thaliana reference genome.</title>
        <authorList>
            <person name="Cheng C.Y."/>
            <person name="Krishnakumar V."/>
            <person name="Chan A.P."/>
            <person name="Thibaud-Nissen F."/>
            <person name="Schobel S."/>
            <person name="Town C.D."/>
        </authorList>
    </citation>
    <scope>GENOME REANNOTATION</scope>
    <source>
        <strain>cv. Columbia</strain>
    </source>
</reference>
<reference key="3">
    <citation type="journal article" date="2010" name="Plant Physiol.">
        <title>RTM3, which controls long-distance movement of potyviruses, is a member of a new plant gene family encoding a meprin and TRAF homology domain-containing protein.</title>
        <authorList>
            <person name="Cosson P."/>
            <person name="Sofer L."/>
            <person name="Le Q.H."/>
            <person name="Leger V."/>
            <person name="Schurdi-Levraud V."/>
            <person name="Whitham S.A."/>
            <person name="Yamamoto M.L."/>
            <person name="Gopalan S."/>
            <person name="Le Gall O."/>
            <person name="Candresse T."/>
            <person name="Carrington J.C."/>
            <person name="Revers F."/>
        </authorList>
    </citation>
    <scope>GENE FAMILY</scope>
</reference>
<name>MCC05_ARATH</name>
<proteinExistence type="predicted"/>
<keyword id="KW-0175">Coiled coil</keyword>
<keyword id="KW-1185">Reference proteome</keyword>
<organism>
    <name type="scientific">Arabidopsis thaliana</name>
    <name type="common">Mouse-ear cress</name>
    <dbReference type="NCBI Taxonomy" id="3702"/>
    <lineage>
        <taxon>Eukaryota</taxon>
        <taxon>Viridiplantae</taxon>
        <taxon>Streptophyta</taxon>
        <taxon>Embryophyta</taxon>
        <taxon>Tracheophyta</taxon>
        <taxon>Spermatophyta</taxon>
        <taxon>Magnoliopsida</taxon>
        <taxon>eudicotyledons</taxon>
        <taxon>Gunneridae</taxon>
        <taxon>Pentapetalae</taxon>
        <taxon>rosids</taxon>
        <taxon>malvids</taxon>
        <taxon>Brassicales</taxon>
        <taxon>Brassicaceae</taxon>
        <taxon>Camelineae</taxon>
        <taxon>Arabidopsis</taxon>
    </lineage>
</organism>
<dbReference type="EMBL" id="AC007289">
    <property type="protein sequence ID" value="AAD32895.1"/>
    <property type="molecule type" value="Genomic_DNA"/>
</dbReference>
<dbReference type="EMBL" id="CP002685">
    <property type="protein sequence ID" value="AEC05928.1"/>
    <property type="molecule type" value="Genomic_DNA"/>
</dbReference>
<dbReference type="PIR" id="C84468">
    <property type="entry name" value="C84468"/>
</dbReference>
<dbReference type="RefSeq" id="NP_178610.1">
    <property type="nucleotide sequence ID" value="NM_126565.2"/>
</dbReference>
<dbReference type="SMR" id="Q9SHT2"/>
<dbReference type="FunCoup" id="Q9SHT2">
    <property type="interactions" value="47"/>
</dbReference>
<dbReference type="PaxDb" id="3702-AT2G05420.1"/>
<dbReference type="ProteomicsDB" id="238878"/>
<dbReference type="EnsemblPlants" id="AT2G05420.1">
    <property type="protein sequence ID" value="AT2G05420.1"/>
    <property type="gene ID" value="AT2G05420"/>
</dbReference>
<dbReference type="GeneID" id="815090"/>
<dbReference type="Gramene" id="AT2G05420.1">
    <property type="protein sequence ID" value="AT2G05420.1"/>
    <property type="gene ID" value="AT2G05420"/>
</dbReference>
<dbReference type="KEGG" id="ath:AT2G05420"/>
<dbReference type="Araport" id="AT2G05420"/>
<dbReference type="TAIR" id="AT2G05420"/>
<dbReference type="eggNOG" id="KOG1987">
    <property type="taxonomic scope" value="Eukaryota"/>
</dbReference>
<dbReference type="HOGENOM" id="CLU_026537_0_0_1"/>
<dbReference type="InParanoid" id="Q9SHT2"/>
<dbReference type="OMA" id="TESQHWF"/>
<dbReference type="PhylomeDB" id="Q9SHT2"/>
<dbReference type="PRO" id="PR:Q9SHT2"/>
<dbReference type="Proteomes" id="UP000006548">
    <property type="component" value="Chromosome 2"/>
</dbReference>
<dbReference type="ExpressionAtlas" id="Q9SHT2">
    <property type="expression patterns" value="differential"/>
</dbReference>
<dbReference type="CDD" id="cd00121">
    <property type="entry name" value="MATH"/>
    <property type="match status" value="1"/>
</dbReference>
<dbReference type="Gene3D" id="2.60.210.10">
    <property type="entry name" value="Apoptosis, Tumor Necrosis Factor Receptor Associated Protein 2, Chain A"/>
    <property type="match status" value="1"/>
</dbReference>
<dbReference type="InterPro" id="IPR050804">
    <property type="entry name" value="MATH-CC_domain_protein"/>
</dbReference>
<dbReference type="InterPro" id="IPR002083">
    <property type="entry name" value="MATH/TRAF_dom"/>
</dbReference>
<dbReference type="InterPro" id="IPR008974">
    <property type="entry name" value="TRAF-like"/>
</dbReference>
<dbReference type="PANTHER" id="PTHR46236">
    <property type="entry name" value="TRAF-LIKE SUPERFAMILY PROTEIN"/>
    <property type="match status" value="1"/>
</dbReference>
<dbReference type="PANTHER" id="PTHR46236:SF9">
    <property type="entry name" value="UBIQUITIN-SPECIFIC PROTEASE FAMILY C19-RELATED PROTEIN"/>
    <property type="match status" value="1"/>
</dbReference>
<dbReference type="Pfam" id="PF22486">
    <property type="entry name" value="MATH_2"/>
    <property type="match status" value="1"/>
</dbReference>
<dbReference type="SMART" id="SM00061">
    <property type="entry name" value="MATH"/>
    <property type="match status" value="1"/>
</dbReference>
<dbReference type="SUPFAM" id="SSF49599">
    <property type="entry name" value="TRAF domain-like"/>
    <property type="match status" value="1"/>
</dbReference>
<dbReference type="PROSITE" id="PS50144">
    <property type="entry name" value="MATH"/>
    <property type="match status" value="1"/>
</dbReference>
<evidence type="ECO:0000255" key="1"/>
<evidence type="ECO:0000255" key="2">
    <source>
        <dbReference type="PROSITE-ProRule" id="PRU00129"/>
    </source>
</evidence>
<protein>
    <recommendedName>
        <fullName>MATH domain and coiled-coil domain-containing protein At2g05420</fullName>
    </recommendedName>
    <alternativeName>
        <fullName>RTM3-like protein At2g05420</fullName>
    </alternativeName>
</protein>
<feature type="chain" id="PRO_0000429282" description="MATH domain and coiled-coil domain-containing protein At2g05420">
    <location>
        <begin position="1"/>
        <end position="297"/>
    </location>
</feature>
<feature type="domain" description="MATH" evidence="2">
    <location>
        <begin position="7"/>
        <end position="139"/>
    </location>
</feature>
<feature type="coiled-coil region" evidence="1">
    <location>
        <begin position="239"/>
        <end position="281"/>
    </location>
</feature>
<sequence length="297" mass="33643">MGKQVDSKTITWVIENFSSLQSASIHSDQFVVGDCKWRLKAYPKGNEKATYLAYRANNLALYLNVANSKSFPIGWTRHTKFSLTLVNQKSEKLSKLTESQHWFDHKSTSRGFPAMIPLTNLHTNEGFLVNGELTLVAKVEVLEVVGKLDVSKKSSPVMETIDVNGFQVLPQIESVNRLFAKHLDIASKFRPKKPYMKTAYMNVLLSLTKTLCQSPQDLSNDDISGAGAALTYLREAGFKLDWLEKKHGEIKEKKKKEEASLKRLQEMEKQIFNEAQIYKEKVLAARAPLSLNEDNVF</sequence>
<gene>
    <name type="ordered locus">At2g05420</name>
    <name type="ORF">F16J10.3</name>
</gene>
<accession>Q9SHT2</accession>